<proteinExistence type="inferred from homology"/>
<name>FATRP_MYCBO</name>
<evidence type="ECO:0000250" key="1">
    <source>
        <dbReference type="UniProtKB" id="P9WQJ3"/>
    </source>
</evidence>
<evidence type="ECO:0000255" key="2"/>
<evidence type="ECO:0000255" key="3">
    <source>
        <dbReference type="PROSITE-ProRule" id="PRU00434"/>
    </source>
</evidence>
<evidence type="ECO:0000255" key="4">
    <source>
        <dbReference type="PROSITE-ProRule" id="PRU00441"/>
    </source>
</evidence>
<evidence type="ECO:0000256" key="5">
    <source>
        <dbReference type="SAM" id="MobiDB-lite"/>
    </source>
</evidence>
<evidence type="ECO:0000305" key="6"/>
<comment type="function">
    <text evidence="1">ABC transporter involved in fatty acid import. Transmembrane domains (TMD) form a pore in the membrane and the ATP-binding domain (NBD) is responsible for energy generation.</text>
</comment>
<comment type="subcellular location">
    <subcellularLocation>
        <location evidence="1">Cell inner membrane</location>
        <topology evidence="2">Multi-pass membrane protein</topology>
    </subcellularLocation>
</comment>
<comment type="domain">
    <text evidence="1">The ATP-binding domain (NBD) and the transmembrane domain (TMD) are fused.</text>
</comment>
<comment type="similarity">
    <text evidence="6">Belongs to the ABC transporter superfamily. Lipid exporter (TC 3.A.1.106) family.</text>
</comment>
<feature type="chain" id="PRO_0000093262" description="Fatty acid ABC transporter ATP-binding/permease protein">
    <location>
        <begin position="1"/>
        <end position="631"/>
    </location>
</feature>
<feature type="transmembrane region" description="Helical" evidence="2">
    <location>
        <begin position="42"/>
        <end position="62"/>
    </location>
</feature>
<feature type="transmembrane region" description="Helical" evidence="2">
    <location>
        <begin position="123"/>
        <end position="143"/>
    </location>
</feature>
<feature type="transmembrane region" description="Helical" evidence="2">
    <location>
        <begin position="205"/>
        <end position="225"/>
    </location>
</feature>
<feature type="domain" description="ABC transmembrane type-1" evidence="4">
    <location>
        <begin position="42"/>
        <end position="365"/>
    </location>
</feature>
<feature type="domain" description="ABC transporter" evidence="3">
    <location>
        <begin position="397"/>
        <end position="631"/>
    </location>
</feature>
<feature type="region of interest" description="Disordered" evidence="5">
    <location>
        <begin position="1"/>
        <end position="20"/>
    </location>
</feature>
<feature type="compositionally biased region" description="Low complexity" evidence="5">
    <location>
        <begin position="1"/>
        <end position="11"/>
    </location>
</feature>
<feature type="binding site" evidence="3">
    <location>
        <begin position="430"/>
        <end position="437"/>
    </location>
    <ligand>
        <name>ATP</name>
        <dbReference type="ChEBI" id="CHEBI:30616"/>
    </ligand>
</feature>
<gene>
    <name type="ordered locus">BQ2027_MB1303C</name>
</gene>
<keyword id="KW-0067">ATP-binding</keyword>
<keyword id="KW-0997">Cell inner membrane</keyword>
<keyword id="KW-1003">Cell membrane</keyword>
<keyword id="KW-0472">Membrane</keyword>
<keyword id="KW-0547">Nucleotide-binding</keyword>
<keyword id="KW-1185">Reference proteome</keyword>
<keyword id="KW-1278">Translocase</keyword>
<keyword id="KW-0812">Transmembrane</keyword>
<keyword id="KW-1133">Transmembrane helix</keyword>
<keyword id="KW-0813">Transport</keyword>
<accession>P63398</accession>
<accession>A0A1R3XXV7</accession>
<accession>Q11047</accession>
<accession>X2BHV5</accession>
<protein>
    <recommendedName>
        <fullName evidence="1">Fatty acid ABC transporter ATP-binding/permease protein</fullName>
        <ecNumber evidence="1">7.6.2.-</ecNumber>
    </recommendedName>
</protein>
<sequence>MTAPPGARPRAASPPPNMRSRDFWGSAARLVKRLAPQRRLSIAVITLGIAGTTIGVIVPRILGHATDLLFNGVIGRGLPGGITKAQAVASARARGDNTFADLLSGMNVVPGQGVDFAAVERTLALALALYLAAALMIWAQARLLNLTVQKTMVRLRTDVEDKVHRLPLSYFDGQQRGELLSRVTNDIDNLQSSLSMTISQLVTSILTMVAVLAMMVSISGLLALITLLTVPLSLLVTRAITRRSQPLFVAHWTSTGRLNAHLEETYSGFTVVKTFGHQAAARERFHELNDDVYQAGFGAQFLSGLVQPATAFIGNLGYVAVAVAGGLQVATGQITLGSIQAFIQYIRQFNMPLSQLAGMYNALQSGVASAERVFDVLDEPEESPEPEPELPNLTGRVEFEHVNFAYLPGTPVIRDLSLVAEPGSTVAIVGPTGAGKTTLVNLLMRFYEIGSGRILIDGVDIASVSRQSLRSRIGMVLQDTWLYDGTIAENIAYGRPEATTDEIVEAARAAHVDRFVNTLPAGYQTRVSGDGGSISVGEKQLITIARAFLARPQLLILDEATSSVDTRTELLIQRAMRELRRDRTSFIIAHRLSTIRDADHILVVQTGQIVERGNHAELLARRGVYYQMTRA</sequence>
<dbReference type="EC" id="7.6.2.-" evidence="1"/>
<dbReference type="EMBL" id="LT708304">
    <property type="protein sequence ID" value="SIT99906.1"/>
    <property type="molecule type" value="Genomic_DNA"/>
</dbReference>
<dbReference type="RefSeq" id="NP_854957.1">
    <property type="nucleotide sequence ID" value="NC_002945.3"/>
</dbReference>
<dbReference type="RefSeq" id="WP_003406569.1">
    <property type="nucleotide sequence ID" value="NC_002945.4"/>
</dbReference>
<dbReference type="SMR" id="P63398"/>
<dbReference type="KEGG" id="mbo:BQ2027_MB1303C"/>
<dbReference type="PATRIC" id="fig|233413.5.peg.1428"/>
<dbReference type="Proteomes" id="UP000001419">
    <property type="component" value="Chromosome"/>
</dbReference>
<dbReference type="GO" id="GO:0005886">
    <property type="term" value="C:plasma membrane"/>
    <property type="evidence" value="ECO:0007669"/>
    <property type="project" value="UniProtKB-SubCell"/>
</dbReference>
<dbReference type="GO" id="GO:0015421">
    <property type="term" value="F:ABC-type oligopeptide transporter activity"/>
    <property type="evidence" value="ECO:0007669"/>
    <property type="project" value="TreeGrafter"/>
</dbReference>
<dbReference type="GO" id="GO:0005524">
    <property type="term" value="F:ATP binding"/>
    <property type="evidence" value="ECO:0007669"/>
    <property type="project" value="UniProtKB-KW"/>
</dbReference>
<dbReference type="GO" id="GO:0016887">
    <property type="term" value="F:ATP hydrolysis activity"/>
    <property type="evidence" value="ECO:0007669"/>
    <property type="project" value="InterPro"/>
</dbReference>
<dbReference type="CDD" id="cd18547">
    <property type="entry name" value="ABC_6TM_Tm288_like"/>
    <property type="match status" value="1"/>
</dbReference>
<dbReference type="CDD" id="cd03254">
    <property type="entry name" value="ABCC_Glucan_exporter_like"/>
    <property type="match status" value="1"/>
</dbReference>
<dbReference type="FunFam" id="3.40.50.300:FF:000287">
    <property type="entry name" value="Multidrug ABC transporter ATP-binding protein"/>
    <property type="match status" value="1"/>
</dbReference>
<dbReference type="Gene3D" id="1.20.1560.10">
    <property type="entry name" value="ABC transporter type 1, transmembrane domain"/>
    <property type="match status" value="1"/>
</dbReference>
<dbReference type="Gene3D" id="3.40.50.300">
    <property type="entry name" value="P-loop containing nucleotide triphosphate hydrolases"/>
    <property type="match status" value="1"/>
</dbReference>
<dbReference type="InterPro" id="IPR003593">
    <property type="entry name" value="AAA+_ATPase"/>
</dbReference>
<dbReference type="InterPro" id="IPR011527">
    <property type="entry name" value="ABC1_TM_dom"/>
</dbReference>
<dbReference type="InterPro" id="IPR036640">
    <property type="entry name" value="ABC1_TM_sf"/>
</dbReference>
<dbReference type="InterPro" id="IPR003439">
    <property type="entry name" value="ABC_transporter-like_ATP-bd"/>
</dbReference>
<dbReference type="InterPro" id="IPR017871">
    <property type="entry name" value="ABC_transporter-like_CS"/>
</dbReference>
<dbReference type="InterPro" id="IPR027417">
    <property type="entry name" value="P-loop_NTPase"/>
</dbReference>
<dbReference type="InterPro" id="IPR039421">
    <property type="entry name" value="Type_1_exporter"/>
</dbReference>
<dbReference type="PANTHER" id="PTHR43394:SF1">
    <property type="entry name" value="ATP-BINDING CASSETTE SUB-FAMILY B MEMBER 10, MITOCHONDRIAL"/>
    <property type="match status" value="1"/>
</dbReference>
<dbReference type="PANTHER" id="PTHR43394">
    <property type="entry name" value="ATP-DEPENDENT PERMEASE MDL1, MITOCHONDRIAL"/>
    <property type="match status" value="1"/>
</dbReference>
<dbReference type="Pfam" id="PF00664">
    <property type="entry name" value="ABC_membrane"/>
    <property type="match status" value="1"/>
</dbReference>
<dbReference type="Pfam" id="PF00005">
    <property type="entry name" value="ABC_tran"/>
    <property type="match status" value="1"/>
</dbReference>
<dbReference type="SMART" id="SM00382">
    <property type="entry name" value="AAA"/>
    <property type="match status" value="1"/>
</dbReference>
<dbReference type="SUPFAM" id="SSF90123">
    <property type="entry name" value="ABC transporter transmembrane region"/>
    <property type="match status" value="1"/>
</dbReference>
<dbReference type="SUPFAM" id="SSF52540">
    <property type="entry name" value="P-loop containing nucleoside triphosphate hydrolases"/>
    <property type="match status" value="1"/>
</dbReference>
<dbReference type="PROSITE" id="PS50929">
    <property type="entry name" value="ABC_TM1F"/>
    <property type="match status" value="1"/>
</dbReference>
<dbReference type="PROSITE" id="PS00211">
    <property type="entry name" value="ABC_TRANSPORTER_1"/>
    <property type="match status" value="1"/>
</dbReference>
<dbReference type="PROSITE" id="PS50893">
    <property type="entry name" value="ABC_TRANSPORTER_2"/>
    <property type="match status" value="1"/>
</dbReference>
<reference key="1">
    <citation type="journal article" date="2003" name="Proc. Natl. Acad. Sci. U.S.A.">
        <title>The complete genome sequence of Mycobacterium bovis.</title>
        <authorList>
            <person name="Garnier T."/>
            <person name="Eiglmeier K."/>
            <person name="Camus J.-C."/>
            <person name="Medina N."/>
            <person name="Mansoor H."/>
            <person name="Pryor M."/>
            <person name="Duthoy S."/>
            <person name="Grondin S."/>
            <person name="Lacroix C."/>
            <person name="Monsempe C."/>
            <person name="Simon S."/>
            <person name="Harris B."/>
            <person name="Atkin R."/>
            <person name="Doggett J."/>
            <person name="Mayes R."/>
            <person name="Keating L."/>
            <person name="Wheeler P.R."/>
            <person name="Parkhill J."/>
            <person name="Barrell B.G."/>
            <person name="Cole S.T."/>
            <person name="Gordon S.V."/>
            <person name="Hewinson R.G."/>
        </authorList>
    </citation>
    <scope>NUCLEOTIDE SEQUENCE [LARGE SCALE GENOMIC DNA]</scope>
    <source>
        <strain>ATCC BAA-935 / AF2122/97</strain>
    </source>
</reference>
<reference key="2">
    <citation type="journal article" date="2017" name="Genome Announc.">
        <title>Updated reference genome sequence and annotation of Mycobacterium bovis AF2122/97.</title>
        <authorList>
            <person name="Malone K.M."/>
            <person name="Farrell D."/>
            <person name="Stuber T.P."/>
            <person name="Schubert O.T."/>
            <person name="Aebersold R."/>
            <person name="Robbe-Austerman S."/>
            <person name="Gordon S.V."/>
        </authorList>
    </citation>
    <scope>NUCLEOTIDE SEQUENCE [LARGE SCALE GENOMIC DNA]</scope>
    <scope>GENOME REANNOTATION</scope>
    <source>
        <strain>ATCC BAA-935 / AF2122/97</strain>
    </source>
</reference>
<organism>
    <name type="scientific">Mycobacterium bovis (strain ATCC BAA-935 / AF2122/97)</name>
    <dbReference type="NCBI Taxonomy" id="233413"/>
    <lineage>
        <taxon>Bacteria</taxon>
        <taxon>Bacillati</taxon>
        <taxon>Actinomycetota</taxon>
        <taxon>Actinomycetes</taxon>
        <taxon>Mycobacteriales</taxon>
        <taxon>Mycobacteriaceae</taxon>
        <taxon>Mycobacterium</taxon>
        <taxon>Mycobacterium tuberculosis complex</taxon>
    </lineage>
</organism>